<keyword id="KW-0002">3D-structure</keyword>
<keyword id="KW-0119">Carbohydrate metabolism</keyword>
<keyword id="KW-0238">DNA-binding</keyword>
<keyword id="KW-0299">Galactose metabolism</keyword>
<keyword id="KW-1185">Reference proteome</keyword>
<keyword id="KW-0678">Repressor</keyword>
<keyword id="KW-0804">Transcription</keyword>
<keyword id="KW-0805">Transcription regulation</keyword>
<proteinExistence type="evidence at protein level"/>
<protein>
    <recommendedName>
        <fullName>Galactose/lactose metabolism regulatory protein GAL80</fullName>
    </recommendedName>
</protein>
<reference key="1">
    <citation type="journal article" date="1993" name="Mol. Cell. Biol.">
        <title>Gal80 proteins of Kluyveromyces lactis and Saccharomyces cerevisiae are highly conserved but contribute differently to glucose repression of the galactose regulon.</title>
        <authorList>
            <person name="Zenke F.T."/>
            <person name="Zachariae W."/>
            <person name="Lunkes A."/>
            <person name="Breunig K.D."/>
        </authorList>
    </citation>
    <scope>NUCLEOTIDE SEQUENCE [GENOMIC DNA]</scope>
</reference>
<reference key="2">
    <citation type="journal article" date="2004" name="Nature">
        <title>Genome evolution in yeasts.</title>
        <authorList>
            <person name="Dujon B."/>
            <person name="Sherman D."/>
            <person name="Fischer G."/>
            <person name="Durrens P."/>
            <person name="Casaregola S."/>
            <person name="Lafontaine I."/>
            <person name="de Montigny J."/>
            <person name="Marck C."/>
            <person name="Neuveglise C."/>
            <person name="Talla E."/>
            <person name="Goffard N."/>
            <person name="Frangeul L."/>
            <person name="Aigle M."/>
            <person name="Anthouard V."/>
            <person name="Babour A."/>
            <person name="Barbe V."/>
            <person name="Barnay S."/>
            <person name="Blanchin S."/>
            <person name="Beckerich J.-M."/>
            <person name="Beyne E."/>
            <person name="Bleykasten C."/>
            <person name="Boisrame A."/>
            <person name="Boyer J."/>
            <person name="Cattolico L."/>
            <person name="Confanioleri F."/>
            <person name="de Daruvar A."/>
            <person name="Despons L."/>
            <person name="Fabre E."/>
            <person name="Fairhead C."/>
            <person name="Ferry-Dumazet H."/>
            <person name="Groppi A."/>
            <person name="Hantraye F."/>
            <person name="Hennequin C."/>
            <person name="Jauniaux N."/>
            <person name="Joyet P."/>
            <person name="Kachouri R."/>
            <person name="Kerrest A."/>
            <person name="Koszul R."/>
            <person name="Lemaire M."/>
            <person name="Lesur I."/>
            <person name="Ma L."/>
            <person name="Muller H."/>
            <person name="Nicaud J.-M."/>
            <person name="Nikolski M."/>
            <person name="Oztas S."/>
            <person name="Ozier-Kalogeropoulos O."/>
            <person name="Pellenz S."/>
            <person name="Potier S."/>
            <person name="Richard G.-F."/>
            <person name="Straub M.-L."/>
            <person name="Suleau A."/>
            <person name="Swennen D."/>
            <person name="Tekaia F."/>
            <person name="Wesolowski-Louvel M."/>
            <person name="Westhof E."/>
            <person name="Wirth B."/>
            <person name="Zeniou-Meyer M."/>
            <person name="Zivanovic Y."/>
            <person name="Bolotin-Fukuhara M."/>
            <person name="Thierry A."/>
            <person name="Bouchier C."/>
            <person name="Caudron B."/>
            <person name="Scarpelli C."/>
            <person name="Gaillardin C."/>
            <person name="Weissenbach J."/>
            <person name="Wincker P."/>
            <person name="Souciet J.-L."/>
        </authorList>
    </citation>
    <scope>NUCLEOTIDE SEQUENCE [LARGE SCALE GENOMIC DNA]</scope>
    <source>
        <strain>ATCC 8585 / CBS 2359 / DSM 70799 / NBRC 1267 / NRRL Y-1140 / WM37</strain>
    </source>
</reference>
<gene>
    <name type="primary">GAL80</name>
    <name type="ordered locus">KLLA0A08162g</name>
</gene>
<comment type="function">
    <text>This protein is a negative regulator for the gene expression of the lactose/galactose metabolic genes. It seems to block activation by the transcriptional activator LAC9 in the absence of an inducing sugar.</text>
</comment>
<comment type="similarity">
    <text evidence="2">To yeast GAL80.</text>
</comment>
<dbReference type="EMBL" id="Z21512">
    <property type="protein sequence ID" value="CAA79724.1"/>
    <property type="molecule type" value="Genomic_DNA"/>
</dbReference>
<dbReference type="EMBL" id="CR382121">
    <property type="protein sequence ID" value="CAH02951.1"/>
    <property type="molecule type" value="Genomic_DNA"/>
</dbReference>
<dbReference type="PIR" id="A54604">
    <property type="entry name" value="A54604"/>
</dbReference>
<dbReference type="RefSeq" id="XP_451363.1">
    <property type="nucleotide sequence ID" value="XM_451363.1"/>
</dbReference>
<dbReference type="PDB" id="2NVW">
    <property type="method" value="X-ray"/>
    <property type="resolution" value="2.10 A"/>
    <property type="chains" value="A/B=2-457"/>
</dbReference>
<dbReference type="PDB" id="3E1K">
    <property type="method" value="X-ray"/>
    <property type="resolution" value="3.00 A"/>
    <property type="chains" value="A/C/E/G/I/K/M/O=1-457"/>
</dbReference>
<dbReference type="PDBsum" id="2NVW"/>
<dbReference type="PDBsum" id="3E1K"/>
<dbReference type="SMR" id="Q06433"/>
<dbReference type="FunCoup" id="Q06433">
    <property type="interactions" value="407"/>
</dbReference>
<dbReference type="STRING" id="284590.Q06433"/>
<dbReference type="PaxDb" id="284590-Q06433"/>
<dbReference type="KEGG" id="kla:KLLA0_A08162g"/>
<dbReference type="eggNOG" id="KOG2741">
    <property type="taxonomic scope" value="Eukaryota"/>
</dbReference>
<dbReference type="HOGENOM" id="CLU_023194_25_0_1"/>
<dbReference type="InParanoid" id="Q06433"/>
<dbReference type="OMA" id="DHMFVQG"/>
<dbReference type="EvolutionaryTrace" id="Q06433"/>
<dbReference type="Proteomes" id="UP000000598">
    <property type="component" value="Chromosome A"/>
</dbReference>
<dbReference type="GO" id="GO:0003677">
    <property type="term" value="F:DNA binding"/>
    <property type="evidence" value="ECO:0007669"/>
    <property type="project" value="UniProtKB-KW"/>
</dbReference>
<dbReference type="GO" id="GO:0000166">
    <property type="term" value="F:nucleotide binding"/>
    <property type="evidence" value="ECO:0007669"/>
    <property type="project" value="InterPro"/>
</dbReference>
<dbReference type="GO" id="GO:0006012">
    <property type="term" value="P:galactose metabolic process"/>
    <property type="evidence" value="ECO:0007669"/>
    <property type="project" value="UniProtKB-KW"/>
</dbReference>
<dbReference type="DisProt" id="DP01624"/>
<dbReference type="Gene3D" id="3.30.360.10">
    <property type="entry name" value="Dihydrodipicolinate Reductase, domain 2"/>
    <property type="match status" value="2"/>
</dbReference>
<dbReference type="Gene3D" id="3.40.50.720">
    <property type="entry name" value="NAD(P)-binding Rossmann-like Domain"/>
    <property type="match status" value="1"/>
</dbReference>
<dbReference type="InterPro" id="IPR055080">
    <property type="entry name" value="Gal80p-like_C"/>
</dbReference>
<dbReference type="InterPro" id="IPR000683">
    <property type="entry name" value="Gfo/Idh/MocA-like_OxRdtase_N"/>
</dbReference>
<dbReference type="InterPro" id="IPR051317">
    <property type="entry name" value="Gfo/Idh/MocA_oxidoreduct"/>
</dbReference>
<dbReference type="InterPro" id="IPR036291">
    <property type="entry name" value="NAD(P)-bd_dom_sf"/>
</dbReference>
<dbReference type="PANTHER" id="PTHR43708">
    <property type="entry name" value="CONSERVED EXPRESSED OXIDOREDUCTASE (EUROFUNG)"/>
    <property type="match status" value="1"/>
</dbReference>
<dbReference type="PANTHER" id="PTHR43708:SF1">
    <property type="entry name" value="GALACTOSE_LACTOSE METABOLISM REGULATORY PROTEIN GAL80"/>
    <property type="match status" value="1"/>
</dbReference>
<dbReference type="Pfam" id="PF22685">
    <property type="entry name" value="Gal80p_C-like"/>
    <property type="match status" value="1"/>
</dbReference>
<dbReference type="Pfam" id="PF01408">
    <property type="entry name" value="GFO_IDH_MocA"/>
    <property type="match status" value="1"/>
</dbReference>
<dbReference type="SUPFAM" id="SSF55347">
    <property type="entry name" value="Glyceraldehyde-3-phosphate dehydrogenase-like, C-terminal domain"/>
    <property type="match status" value="1"/>
</dbReference>
<dbReference type="SUPFAM" id="SSF51735">
    <property type="entry name" value="NAD(P)-binding Rossmann-fold domains"/>
    <property type="match status" value="2"/>
</dbReference>
<accession>Q06433</accession>
<sequence>MNNNKRSKLSTVPSSRPIRVGFVGLTSGKSWVAKTHFLAIQQLSSQFQIVALYNPTLKSSLQTIEQLQLKHATGFDSLESFAQYKDIDMIVVSVKVPEHYEVVKNILEHSSQNLNLRYLYVEWALAASVQQAEELYSISQQRANLQTIICLQGRKSPYIVRAKELISEGCIGDINSIEISGNGGWYGYERPMRSPEYLYDIESGVNLISNSFGHTIDVLQYITGSYFQKINAMISNNIPTQFLLDENGKRTKETISKTCPDHLLFQGILENGKVPVSCSFKGGTPVKKLTKNLVIDIHGTKGDLKIEGDAGFVEISNLVLYFYGIKNGNGSSNGTDNNGAAAIKDKEKVTKSPSPSTGTSEEEQTMEVFHLRNYNSVVGNILRIYESIADYHFLGKPESKSSRGPDDLFASTKFDKQGFRFEGFPTFKDAIILHRLIDAVFRSDKEEKTLDVSKIMI</sequence>
<name>GAL80_KLULA</name>
<feature type="chain" id="PRO_0000087426" description="Galactose/lactose metabolism regulatory protein GAL80">
    <location>
        <begin position="1"/>
        <end position="457"/>
    </location>
</feature>
<feature type="region of interest" description="Disordered" evidence="1">
    <location>
        <begin position="333"/>
        <end position="364"/>
    </location>
</feature>
<feature type="helix" evidence="3">
    <location>
        <begin position="8"/>
        <end position="10"/>
    </location>
</feature>
<feature type="helix" evidence="3">
    <location>
        <begin position="13"/>
        <end position="15"/>
    </location>
</feature>
<feature type="strand" evidence="3">
    <location>
        <begin position="18"/>
        <end position="23"/>
    </location>
</feature>
<feature type="helix" evidence="3">
    <location>
        <begin position="31"/>
        <end position="34"/>
    </location>
</feature>
<feature type="helix" evidence="3">
    <location>
        <begin position="36"/>
        <end position="42"/>
    </location>
</feature>
<feature type="turn" evidence="3">
    <location>
        <begin position="43"/>
        <end position="46"/>
    </location>
</feature>
<feature type="strand" evidence="3">
    <location>
        <begin position="47"/>
        <end position="53"/>
    </location>
</feature>
<feature type="helix" evidence="3">
    <location>
        <begin position="57"/>
        <end position="66"/>
    </location>
</feature>
<feature type="strand" evidence="3">
    <location>
        <begin position="73"/>
        <end position="76"/>
    </location>
</feature>
<feature type="helix" evidence="3">
    <location>
        <begin position="78"/>
        <end position="83"/>
    </location>
</feature>
<feature type="strand" evidence="3">
    <location>
        <begin position="88"/>
        <end position="92"/>
    </location>
</feature>
<feature type="helix" evidence="3">
    <location>
        <begin position="96"/>
        <end position="109"/>
    </location>
</feature>
<feature type="strand" evidence="3">
    <location>
        <begin position="110"/>
        <end position="112"/>
    </location>
</feature>
<feature type="strand" evidence="3">
    <location>
        <begin position="118"/>
        <end position="128"/>
    </location>
</feature>
<feature type="helix" evidence="3">
    <location>
        <begin position="129"/>
        <end position="140"/>
    </location>
</feature>
<feature type="strand" evidence="3">
    <location>
        <begin position="146"/>
        <end position="150"/>
    </location>
</feature>
<feature type="helix" evidence="3">
    <location>
        <begin position="152"/>
        <end position="155"/>
    </location>
</feature>
<feature type="helix" evidence="3">
    <location>
        <begin position="157"/>
        <end position="167"/>
    </location>
</feature>
<feature type="turn" evidence="3">
    <location>
        <begin position="168"/>
        <end position="171"/>
    </location>
</feature>
<feature type="strand" evidence="3">
    <location>
        <begin position="173"/>
        <end position="182"/>
    </location>
</feature>
<feature type="strand" evidence="3">
    <location>
        <begin position="184"/>
        <end position="191"/>
    </location>
</feature>
<feature type="helix" evidence="3">
    <location>
        <begin position="196"/>
        <end position="199"/>
    </location>
</feature>
<feature type="helix" evidence="3">
    <location>
        <begin position="201"/>
        <end position="203"/>
    </location>
</feature>
<feature type="turn" evidence="3">
    <location>
        <begin position="207"/>
        <end position="210"/>
    </location>
</feature>
<feature type="helix" evidence="3">
    <location>
        <begin position="211"/>
        <end position="223"/>
    </location>
</feature>
<feature type="strand" evidence="3">
    <location>
        <begin position="227"/>
        <end position="235"/>
    </location>
</feature>
<feature type="strand" evidence="3">
    <location>
        <begin position="239"/>
        <end position="244"/>
    </location>
</feature>
<feature type="turn" evidence="4">
    <location>
        <begin position="246"/>
        <end position="248"/>
    </location>
</feature>
<feature type="strand" evidence="3">
    <location>
        <begin position="254"/>
        <end position="256"/>
    </location>
</feature>
<feature type="strand" evidence="3">
    <location>
        <begin position="262"/>
        <end position="270"/>
    </location>
</feature>
<feature type="helix" evidence="3">
    <location>
        <begin position="271"/>
        <end position="273"/>
    </location>
</feature>
<feature type="strand" evidence="3">
    <location>
        <begin position="275"/>
        <end position="281"/>
    </location>
</feature>
<feature type="strand" evidence="3">
    <location>
        <begin position="283"/>
        <end position="285"/>
    </location>
</feature>
<feature type="strand" evidence="3">
    <location>
        <begin position="288"/>
        <end position="290"/>
    </location>
</feature>
<feature type="strand" evidence="3">
    <location>
        <begin position="292"/>
        <end position="301"/>
    </location>
</feature>
<feature type="strand" evidence="3">
    <location>
        <begin position="303"/>
        <end position="308"/>
    </location>
</feature>
<feature type="turn" evidence="4">
    <location>
        <begin position="313"/>
        <end position="315"/>
    </location>
</feature>
<feature type="strand" evidence="3">
    <location>
        <begin position="318"/>
        <end position="326"/>
    </location>
</feature>
<feature type="strand" evidence="3">
    <location>
        <begin position="364"/>
        <end position="369"/>
    </location>
</feature>
<feature type="helix" evidence="3">
    <location>
        <begin position="376"/>
        <end position="393"/>
    </location>
</feature>
<feature type="strand" evidence="3">
    <location>
        <begin position="421"/>
        <end position="423"/>
    </location>
</feature>
<feature type="helix" evidence="3">
    <location>
        <begin position="427"/>
        <end position="446"/>
    </location>
</feature>
<feature type="turn" evidence="3">
    <location>
        <begin position="453"/>
        <end position="456"/>
    </location>
</feature>
<organism>
    <name type="scientific">Kluyveromyces lactis (strain ATCC 8585 / CBS 2359 / DSM 70799 / NBRC 1267 / NRRL Y-1140 / WM37)</name>
    <name type="common">Yeast</name>
    <name type="synonym">Candida sphaerica</name>
    <dbReference type="NCBI Taxonomy" id="284590"/>
    <lineage>
        <taxon>Eukaryota</taxon>
        <taxon>Fungi</taxon>
        <taxon>Dikarya</taxon>
        <taxon>Ascomycota</taxon>
        <taxon>Saccharomycotina</taxon>
        <taxon>Saccharomycetes</taxon>
        <taxon>Saccharomycetales</taxon>
        <taxon>Saccharomycetaceae</taxon>
        <taxon>Kluyveromyces</taxon>
    </lineage>
</organism>
<evidence type="ECO:0000256" key="1">
    <source>
        <dbReference type="SAM" id="MobiDB-lite"/>
    </source>
</evidence>
<evidence type="ECO:0000305" key="2"/>
<evidence type="ECO:0007829" key="3">
    <source>
        <dbReference type="PDB" id="2NVW"/>
    </source>
</evidence>
<evidence type="ECO:0007829" key="4">
    <source>
        <dbReference type="PDB" id="3E1K"/>
    </source>
</evidence>